<dbReference type="EMBL" id="AE017261">
    <property type="protein sequence ID" value="AAT42829.1"/>
    <property type="molecule type" value="Genomic_DNA"/>
</dbReference>
<dbReference type="RefSeq" id="WP_011177045.1">
    <property type="nucleotide sequence ID" value="NC_005877.1"/>
</dbReference>
<dbReference type="SMR" id="Q6L2H3"/>
<dbReference type="FunCoup" id="Q6L2H3">
    <property type="interactions" value="170"/>
</dbReference>
<dbReference type="STRING" id="263820.PTO0244"/>
<dbReference type="PaxDb" id="263820-PTO0244"/>
<dbReference type="GeneID" id="2844138"/>
<dbReference type="KEGG" id="pto:PTO0244"/>
<dbReference type="PATRIC" id="fig|263820.9.peg.262"/>
<dbReference type="eggNOG" id="arCOG04185">
    <property type="taxonomic scope" value="Archaea"/>
</dbReference>
<dbReference type="HOGENOM" id="CLU_090139_2_0_2"/>
<dbReference type="InParanoid" id="Q6L2H3"/>
<dbReference type="OrthoDB" id="6533at2157"/>
<dbReference type="Proteomes" id="UP000000438">
    <property type="component" value="Chromosome"/>
</dbReference>
<dbReference type="GO" id="GO:0022627">
    <property type="term" value="C:cytosolic small ribosomal subunit"/>
    <property type="evidence" value="ECO:0007669"/>
    <property type="project" value="TreeGrafter"/>
</dbReference>
<dbReference type="GO" id="GO:0070181">
    <property type="term" value="F:small ribosomal subunit rRNA binding"/>
    <property type="evidence" value="ECO:0007669"/>
    <property type="project" value="TreeGrafter"/>
</dbReference>
<dbReference type="GO" id="GO:0003735">
    <property type="term" value="F:structural constituent of ribosome"/>
    <property type="evidence" value="ECO:0007669"/>
    <property type="project" value="InterPro"/>
</dbReference>
<dbReference type="GO" id="GO:0006412">
    <property type="term" value="P:translation"/>
    <property type="evidence" value="ECO:0007669"/>
    <property type="project" value="UniProtKB-UniRule"/>
</dbReference>
<dbReference type="CDD" id="cd00353">
    <property type="entry name" value="Ribosomal_S15p_S13e"/>
    <property type="match status" value="1"/>
</dbReference>
<dbReference type="Gene3D" id="4.10.860.130">
    <property type="match status" value="1"/>
</dbReference>
<dbReference type="Gene3D" id="1.10.287.10">
    <property type="entry name" value="S15/NS1, RNA-binding"/>
    <property type="match status" value="1"/>
</dbReference>
<dbReference type="HAMAP" id="MF_01343_A">
    <property type="entry name" value="Ribosomal_uS15_A"/>
    <property type="match status" value="1"/>
</dbReference>
<dbReference type="InterPro" id="IPR000589">
    <property type="entry name" value="Ribosomal_uS15"/>
</dbReference>
<dbReference type="InterPro" id="IPR023029">
    <property type="entry name" value="Ribosomal_uS15_arc_euk"/>
</dbReference>
<dbReference type="InterPro" id="IPR012606">
    <property type="entry name" value="Ribosomal_uS15_N"/>
</dbReference>
<dbReference type="InterPro" id="IPR009068">
    <property type="entry name" value="uS15_NS1_RNA-bd_sf"/>
</dbReference>
<dbReference type="NCBIfam" id="NF006331">
    <property type="entry name" value="PRK08561.1"/>
    <property type="match status" value="1"/>
</dbReference>
<dbReference type="PANTHER" id="PTHR11885">
    <property type="entry name" value="RIBOSOMAL PROTEIN S15P/S13E"/>
    <property type="match status" value="1"/>
</dbReference>
<dbReference type="PANTHER" id="PTHR11885:SF6">
    <property type="entry name" value="SMALL RIBOSOMAL SUBUNIT PROTEIN US15"/>
    <property type="match status" value="1"/>
</dbReference>
<dbReference type="Pfam" id="PF08069">
    <property type="entry name" value="Ribosomal_S13_N"/>
    <property type="match status" value="1"/>
</dbReference>
<dbReference type="Pfam" id="PF00312">
    <property type="entry name" value="Ribosomal_S15"/>
    <property type="match status" value="1"/>
</dbReference>
<dbReference type="SMART" id="SM01386">
    <property type="entry name" value="Ribosomal_S13_N"/>
    <property type="match status" value="1"/>
</dbReference>
<dbReference type="SMART" id="SM01387">
    <property type="entry name" value="Ribosomal_S15"/>
    <property type="match status" value="1"/>
</dbReference>
<dbReference type="SUPFAM" id="SSF47060">
    <property type="entry name" value="S15/NS1 RNA-binding domain"/>
    <property type="match status" value="1"/>
</dbReference>
<feature type="chain" id="PRO_0000115614" description="Small ribosomal subunit protein uS15">
    <location>
        <begin position="1"/>
        <end position="146"/>
    </location>
</feature>
<organism>
    <name type="scientific">Picrophilus torridus (strain ATCC 700027 / DSM 9790 / JCM 10055 / NBRC 100828 / KAW 2/3)</name>
    <dbReference type="NCBI Taxonomy" id="1122961"/>
    <lineage>
        <taxon>Archaea</taxon>
        <taxon>Methanobacteriati</taxon>
        <taxon>Thermoplasmatota</taxon>
        <taxon>Thermoplasmata</taxon>
        <taxon>Thermoplasmatales</taxon>
        <taxon>Picrophilaceae</taxon>
        <taxon>Picrophilus</taxon>
    </lineage>
</organism>
<keyword id="KW-0687">Ribonucleoprotein</keyword>
<keyword id="KW-0689">Ribosomal protein</keyword>
<proteinExistence type="inferred from homology"/>
<sequence length="146" mass="17534">MARMHTRKRGRSGSKRIEVRERPSWIQYSDDEIKEMIVKMRKQGMTKSMIGIRLRDQYAIPGTRPVLHMKLGQVLKENNLESDVPEDLQALIERYKRAMKHLSLNKHDMNNKRKAQLIMSKMLRLIRYYKRTSRLPQDWSLERVLQ</sequence>
<name>RS15_PICTO</name>
<reference key="1">
    <citation type="journal article" date="2004" name="Proc. Natl. Acad. Sci. U.S.A.">
        <title>Genome sequence of Picrophilus torridus and its implications for life around pH 0.</title>
        <authorList>
            <person name="Fuetterer O."/>
            <person name="Angelov A."/>
            <person name="Liesegang H."/>
            <person name="Gottschalk G."/>
            <person name="Schleper C."/>
            <person name="Schepers B."/>
            <person name="Dock C."/>
            <person name="Antranikian G."/>
            <person name="Liebl W."/>
        </authorList>
    </citation>
    <scope>NUCLEOTIDE SEQUENCE [LARGE SCALE GENOMIC DNA]</scope>
    <source>
        <strain>ATCC 700027 / DSM 9790 / JCM 10055 / NBRC 100828 / KAW 2/3</strain>
    </source>
</reference>
<comment type="subunit">
    <text evidence="1">Part of the 30S ribosomal subunit.</text>
</comment>
<comment type="similarity">
    <text evidence="1">Belongs to the universal ribosomal protein uS15 family.</text>
</comment>
<evidence type="ECO:0000255" key="1">
    <source>
        <dbReference type="HAMAP-Rule" id="MF_01343"/>
    </source>
</evidence>
<evidence type="ECO:0000305" key="2"/>
<protein>
    <recommendedName>
        <fullName evidence="1">Small ribosomal subunit protein uS15</fullName>
    </recommendedName>
    <alternativeName>
        <fullName evidence="2">30S ribosomal protein S15</fullName>
    </alternativeName>
</protein>
<accession>Q6L2H3</accession>
<gene>
    <name evidence="1" type="primary">rps15</name>
    <name type="ordered locus">PTO0244</name>
</gene>